<evidence type="ECO:0000250" key="1"/>
<evidence type="ECO:0000255" key="2"/>
<evidence type="ECO:0000305" key="3"/>
<feature type="signal peptide" evidence="2">
    <location>
        <begin position="1"/>
        <end position="18"/>
    </location>
</feature>
<feature type="chain" id="PRO_0000411761" description="Probable zinc metalloprotease PTRG_04977">
    <location>
        <begin position="19"/>
        <end position="483"/>
    </location>
</feature>
<feature type="domain" description="Fibronectin type-III">
    <location>
        <begin position="396"/>
        <end position="483"/>
    </location>
</feature>
<feature type="binding site" evidence="1">
    <location>
        <position position="167"/>
    </location>
    <ligand>
        <name>Zn(2+)</name>
        <dbReference type="ChEBI" id="CHEBI:29105"/>
        <label>1</label>
    </ligand>
</feature>
<feature type="binding site" evidence="1">
    <location>
        <position position="187"/>
    </location>
    <ligand>
        <name>Zn(2+)</name>
        <dbReference type="ChEBI" id="CHEBI:29105"/>
        <label>1</label>
    </ligand>
</feature>
<feature type="binding site" evidence="1">
    <location>
        <position position="187"/>
    </location>
    <ligand>
        <name>Zn(2+)</name>
        <dbReference type="ChEBI" id="CHEBI:29105"/>
        <label>2</label>
        <note>catalytic</note>
    </ligand>
</feature>
<feature type="binding site" evidence="1">
    <location>
        <position position="220"/>
    </location>
    <ligand>
        <name>Zn(2+)</name>
        <dbReference type="ChEBI" id="CHEBI:29105"/>
        <label>2</label>
        <note>catalytic</note>
    </ligand>
</feature>
<feature type="binding site" evidence="1">
    <location>
        <position position="247"/>
    </location>
    <ligand>
        <name>Zn(2+)</name>
        <dbReference type="ChEBI" id="CHEBI:29105"/>
        <label>1</label>
    </ligand>
</feature>
<feature type="glycosylation site" description="N-linked (GlcNAc...) asparagine" evidence="2">
    <location>
        <position position="96"/>
    </location>
</feature>
<feature type="glycosylation site" description="N-linked (GlcNAc...) asparagine" evidence="2">
    <location>
        <position position="121"/>
    </location>
</feature>
<feature type="glycosylation site" description="N-linked (GlcNAc...) asparagine" evidence="2">
    <location>
        <position position="235"/>
    </location>
</feature>
<feature type="glycosylation site" description="N-linked (GlcNAc...) asparagine" evidence="2">
    <location>
        <position position="310"/>
    </location>
</feature>
<feature type="glycosylation site" description="N-linked (GlcNAc...) asparagine" evidence="2">
    <location>
        <position position="362"/>
    </location>
</feature>
<feature type="glycosylation site" description="N-linked (GlcNAc...) asparagine" evidence="2">
    <location>
        <position position="401"/>
    </location>
</feature>
<feature type="glycosylation site" description="N-linked (GlcNAc...) asparagine" evidence="2">
    <location>
        <position position="411"/>
    </location>
</feature>
<feature type="glycosylation site" description="N-linked (GlcNAc...) asparagine" evidence="2">
    <location>
        <position position="421"/>
    </location>
</feature>
<organism>
    <name type="scientific">Pyrenophora tritici-repentis (strain Pt-1C-BFP)</name>
    <name type="common">Wheat tan spot fungus</name>
    <name type="synonym">Drechslera tritici-repentis</name>
    <dbReference type="NCBI Taxonomy" id="426418"/>
    <lineage>
        <taxon>Eukaryota</taxon>
        <taxon>Fungi</taxon>
        <taxon>Dikarya</taxon>
        <taxon>Ascomycota</taxon>
        <taxon>Pezizomycotina</taxon>
        <taxon>Dothideomycetes</taxon>
        <taxon>Pleosporomycetidae</taxon>
        <taxon>Pleosporales</taxon>
        <taxon>Pleosporineae</taxon>
        <taxon>Pleosporaceae</taxon>
        <taxon>Pyrenophora</taxon>
    </lineage>
</organism>
<accession>B2W3C7</accession>
<dbReference type="EC" id="3.4.-.-"/>
<dbReference type="EMBL" id="DS231618">
    <property type="protein sequence ID" value="EDU47884.1"/>
    <property type="molecule type" value="Genomic_DNA"/>
</dbReference>
<dbReference type="RefSeq" id="XP_001935310.1">
    <property type="nucleotide sequence ID" value="XM_001935275.1"/>
</dbReference>
<dbReference type="SMR" id="B2W3C7"/>
<dbReference type="STRING" id="426418.B2W3C7"/>
<dbReference type="EnsemblFungi" id="EDU47884">
    <property type="protein sequence ID" value="EDU47884"/>
    <property type="gene ID" value="PTRG_04977"/>
</dbReference>
<dbReference type="GeneID" id="6343221"/>
<dbReference type="KEGG" id="ptrr:6343221"/>
<dbReference type="eggNOG" id="ENOG502R701">
    <property type="taxonomic scope" value="Eukaryota"/>
</dbReference>
<dbReference type="HOGENOM" id="CLU_047420_0_0_1"/>
<dbReference type="InParanoid" id="B2W3C7"/>
<dbReference type="OMA" id="NNDMIGN"/>
<dbReference type="OrthoDB" id="4444at28556"/>
<dbReference type="Proteomes" id="UP000001471">
    <property type="component" value="Unassembled WGS sequence"/>
</dbReference>
<dbReference type="GO" id="GO:0005576">
    <property type="term" value="C:extracellular region"/>
    <property type="evidence" value="ECO:0007669"/>
    <property type="project" value="UniProtKB-SubCell"/>
</dbReference>
<dbReference type="GO" id="GO:0046872">
    <property type="term" value="F:metal ion binding"/>
    <property type="evidence" value="ECO:0007669"/>
    <property type="project" value="UniProtKB-KW"/>
</dbReference>
<dbReference type="GO" id="GO:0008235">
    <property type="term" value="F:metalloexopeptidase activity"/>
    <property type="evidence" value="ECO:0007669"/>
    <property type="project" value="InterPro"/>
</dbReference>
<dbReference type="GO" id="GO:0006508">
    <property type="term" value="P:proteolysis"/>
    <property type="evidence" value="ECO:0007669"/>
    <property type="project" value="UniProtKB-KW"/>
</dbReference>
<dbReference type="CDD" id="cd05642">
    <property type="entry name" value="M28_like"/>
    <property type="match status" value="1"/>
</dbReference>
<dbReference type="Gene3D" id="3.40.630.10">
    <property type="entry name" value="Zn peptidases"/>
    <property type="match status" value="1"/>
</dbReference>
<dbReference type="InterPro" id="IPR045175">
    <property type="entry name" value="M28_fam"/>
</dbReference>
<dbReference type="InterPro" id="IPR007484">
    <property type="entry name" value="Peptidase_M28"/>
</dbReference>
<dbReference type="PANTHER" id="PTHR12147">
    <property type="entry name" value="METALLOPEPTIDASE M28 FAMILY MEMBER"/>
    <property type="match status" value="1"/>
</dbReference>
<dbReference type="PANTHER" id="PTHR12147:SF26">
    <property type="entry name" value="PEPTIDASE M28 DOMAIN-CONTAINING PROTEIN"/>
    <property type="match status" value="1"/>
</dbReference>
<dbReference type="Pfam" id="PF04389">
    <property type="entry name" value="Peptidase_M28"/>
    <property type="match status" value="1"/>
</dbReference>
<dbReference type="SUPFAM" id="SSF53187">
    <property type="entry name" value="Zn-dependent exopeptidases"/>
    <property type="match status" value="1"/>
</dbReference>
<name>M28P2_PYRTR</name>
<sequence length="483" mass="52235">MLFRSALLSNVLLLPACAHDVLFSRDLPLPIAANAESYTDCANAAWPPSNVGVELVPQPPDDELRAMVDEMSAENIEATITKLVSFGTRHTLSTFNSSTRGINAARDWIASEMRKYAAESNGTMTVEVQSYVQGVASRIPFPVTISNVLAKATGSEDPSRVYVMTGHYDSRVTDVLNYESDAPGANDDASGTAIAMELARVLAKHQPKSTIILGAVSGEEQGLYGSTYLAQTLKNTSTNVEGMLNCDIVGSSTGDRGQKDPFTIRAFAQGPPPLSAESSAKAAQRLQIGGENDSPARELARFSAEVAANNATGMKVAIIYRLDRFLRGGDHTGFLQAGYPAIRYTEPNENFAHQHQDIRTENGTVYGDLIEFVDFDFTARVGKVNLATLWSLAQAPAMPRNVTIDATILDNESRIKWIISNSTDVASYEVVWRSTIASLWTHMLDVGKVGYVVLPLSKDNVIFGIRAVGKNGYKSPAVYPFPG</sequence>
<proteinExistence type="inferred from homology"/>
<reference key="1">
    <citation type="journal article" date="2013" name="G3 (Bethesda)">
        <title>Comparative genomics of a plant-pathogenic fungus, Pyrenophora tritici-repentis, reveals transduplication and the impact of repeat elements on pathogenicity and population divergence.</title>
        <authorList>
            <person name="Manning V.A."/>
            <person name="Pandelova I."/>
            <person name="Dhillon B."/>
            <person name="Wilhelm L.J."/>
            <person name="Goodwin S.B."/>
            <person name="Berlin A.M."/>
            <person name="Figueroa M."/>
            <person name="Freitag M."/>
            <person name="Hane J.K."/>
            <person name="Henrissat B."/>
            <person name="Holman W.H."/>
            <person name="Kodira C.D."/>
            <person name="Martin J."/>
            <person name="Oliver R.P."/>
            <person name="Robbertse B."/>
            <person name="Schackwitz W."/>
            <person name="Schwartz D.C."/>
            <person name="Spatafora J.W."/>
            <person name="Turgeon B.G."/>
            <person name="Yandava C."/>
            <person name="Young S."/>
            <person name="Zhou S."/>
            <person name="Zeng Q."/>
            <person name="Grigoriev I.V."/>
            <person name="Ma L.-J."/>
            <person name="Ciuffetti L.M."/>
        </authorList>
    </citation>
    <scope>NUCLEOTIDE SEQUENCE [LARGE SCALE GENOMIC DNA]</scope>
    <source>
        <strain>Pt-1C-BFP</strain>
    </source>
</reference>
<comment type="cofactor">
    <cofactor evidence="1">
        <name>Zn(2+)</name>
        <dbReference type="ChEBI" id="CHEBI:29105"/>
    </cofactor>
    <text evidence="1">Binds 2 Zn(2+) ions per subunit.</text>
</comment>
<comment type="subcellular location">
    <subcellularLocation>
        <location evidence="3">Secreted</location>
    </subcellularLocation>
</comment>
<comment type="similarity">
    <text evidence="3">Belongs to the peptidase M28 family. M28B subfamily.</text>
</comment>
<keyword id="KW-0325">Glycoprotein</keyword>
<keyword id="KW-0378">Hydrolase</keyword>
<keyword id="KW-0479">Metal-binding</keyword>
<keyword id="KW-0482">Metalloprotease</keyword>
<keyword id="KW-0645">Protease</keyword>
<keyword id="KW-1185">Reference proteome</keyword>
<keyword id="KW-0964">Secreted</keyword>
<keyword id="KW-0732">Signal</keyword>
<keyword id="KW-0862">Zinc</keyword>
<protein>
    <recommendedName>
        <fullName>Probable zinc metalloprotease PTRG_04977</fullName>
        <ecNumber>3.4.-.-</ecNumber>
    </recommendedName>
</protein>
<gene>
    <name type="ORF">PTRG_04977</name>
</gene>